<evidence type="ECO:0000255" key="1"/>
<evidence type="ECO:0000256" key="2">
    <source>
        <dbReference type="SAM" id="MobiDB-lite"/>
    </source>
</evidence>
<evidence type="ECO:0000305" key="3"/>
<proteinExistence type="evidence at transcript level"/>
<sequence>MKKSLTLLILLLCSLLFSTVLSNLLVEPVQPNTVPAFPVETQAQSCRLDLSNELFGGVNEACGRNLDRSRCCPVLAAWLFAAHARSALQLPAPAPTPESSDPDEPMKPDDSQKCVNTLQSALLTKQIKIPQPNSSCDAILCFCGIRLHQISSLSCPAAFNVSSGFKNATPTAAVKNLEKECRNSSYSGCTRCLGALQKLKVRGGNKKTTTERGTKMMSKDCQLMGLTWLLARNKTAYIPTVSAVLRAIMYSPHPPHLNKCSPDQENMPLAVDSLQFQKSFSSSSHLFGVLPFLPLVLCIFLFLL</sequence>
<organism>
    <name type="scientific">Arabidopsis thaliana</name>
    <name type="common">Mouse-ear cress</name>
    <dbReference type="NCBI Taxonomy" id="3702"/>
    <lineage>
        <taxon>Eukaryota</taxon>
        <taxon>Viridiplantae</taxon>
        <taxon>Streptophyta</taxon>
        <taxon>Embryophyta</taxon>
        <taxon>Tracheophyta</taxon>
        <taxon>Spermatophyta</taxon>
        <taxon>Magnoliopsida</taxon>
        <taxon>eudicotyledons</taxon>
        <taxon>Gunneridae</taxon>
        <taxon>Pentapetalae</taxon>
        <taxon>rosids</taxon>
        <taxon>malvids</taxon>
        <taxon>Brassicales</taxon>
        <taxon>Brassicaceae</taxon>
        <taxon>Camelineae</taxon>
        <taxon>Arabidopsis</taxon>
    </lineage>
</organism>
<feature type="signal peptide" evidence="1">
    <location>
        <begin position="1"/>
        <end position="22"/>
    </location>
</feature>
<feature type="chain" id="PRO_0000252127" description="Uncharacterized GPI-anchored protein At4g28100">
    <location>
        <begin position="23"/>
        <end position="282"/>
    </location>
</feature>
<feature type="propeptide" id="PRO_0000252128" description="Removed in mature form" evidence="1">
    <location>
        <begin position="283"/>
        <end position="304"/>
    </location>
</feature>
<feature type="region of interest" description="Disordered" evidence="2">
    <location>
        <begin position="91"/>
        <end position="111"/>
    </location>
</feature>
<feature type="lipid moiety-binding region" description="GPI-anchor amidated serine" evidence="1">
    <location>
        <position position="282"/>
    </location>
</feature>
<feature type="glycosylation site" description="N-linked (GlcNAc...) asparagine" evidence="1">
    <location>
        <position position="133"/>
    </location>
</feature>
<feature type="glycosylation site" description="N-linked (GlcNAc...) asparagine" evidence="1">
    <location>
        <position position="160"/>
    </location>
</feature>
<feature type="glycosylation site" description="N-linked (GlcNAc...) asparagine" evidence="1">
    <location>
        <position position="183"/>
    </location>
</feature>
<feature type="glycosylation site" description="N-linked (GlcNAc...) asparagine" evidence="1">
    <location>
        <position position="233"/>
    </location>
</feature>
<feature type="sequence conflict" description="In Ref. 3; AAM65702." evidence="3" ref="3">
    <original>S</original>
    <variation>T</variation>
    <location>
        <position position="14"/>
    </location>
</feature>
<keyword id="KW-1003">Cell membrane</keyword>
<keyword id="KW-0325">Glycoprotein</keyword>
<keyword id="KW-0336">GPI-anchor</keyword>
<keyword id="KW-0449">Lipoprotein</keyword>
<keyword id="KW-0472">Membrane</keyword>
<keyword id="KW-1185">Reference proteome</keyword>
<keyword id="KW-0732">Signal</keyword>
<comment type="subcellular location">
    <subcellularLocation>
        <location>Cell membrane</location>
        <topology>Lipid-anchor</topology>
        <topology>GPI-anchor</topology>
    </subcellularLocation>
</comment>
<name>UGPI7_ARATH</name>
<protein>
    <recommendedName>
        <fullName>Uncharacterized GPI-anchored protein At4g28100</fullName>
    </recommendedName>
</protein>
<gene>
    <name type="ordered locus">At4g28100</name>
    <name type="ORF">T13J8.210</name>
</gene>
<accession>Q9SUC9</accession>
<accession>Q8L9X7</accession>
<dbReference type="EMBL" id="AL035524">
    <property type="protein sequence ID" value="CAB36779.1"/>
    <property type="molecule type" value="Genomic_DNA"/>
</dbReference>
<dbReference type="EMBL" id="AL161572">
    <property type="protein sequence ID" value="CAB79612.1"/>
    <property type="molecule type" value="Genomic_DNA"/>
</dbReference>
<dbReference type="EMBL" id="CP002687">
    <property type="protein sequence ID" value="AEE85441.1"/>
    <property type="molecule type" value="Genomic_DNA"/>
</dbReference>
<dbReference type="EMBL" id="AY088158">
    <property type="protein sequence ID" value="AAM65702.1"/>
    <property type="molecule type" value="mRNA"/>
</dbReference>
<dbReference type="EMBL" id="AK175721">
    <property type="protein sequence ID" value="BAD43484.1"/>
    <property type="molecule type" value="mRNA"/>
</dbReference>
<dbReference type="EMBL" id="AK175274">
    <property type="protein sequence ID" value="BAD43037.1"/>
    <property type="molecule type" value="mRNA"/>
</dbReference>
<dbReference type="PIR" id="T02911">
    <property type="entry name" value="T02911"/>
</dbReference>
<dbReference type="RefSeq" id="NP_567797.1">
    <property type="nucleotide sequence ID" value="NM_118950.4"/>
</dbReference>
<dbReference type="FunCoup" id="Q9SUC9">
    <property type="interactions" value="396"/>
</dbReference>
<dbReference type="STRING" id="3702.Q9SUC9"/>
<dbReference type="GlyGen" id="Q9SUC9">
    <property type="glycosylation" value="5 sites"/>
</dbReference>
<dbReference type="PaxDb" id="3702-AT4G28100.1"/>
<dbReference type="ProteomicsDB" id="246395"/>
<dbReference type="EnsemblPlants" id="AT4G28100.1">
    <property type="protein sequence ID" value="AT4G28100.1"/>
    <property type="gene ID" value="AT4G28100"/>
</dbReference>
<dbReference type="GeneID" id="828926"/>
<dbReference type="Gramene" id="AT4G28100.1">
    <property type="protein sequence ID" value="AT4G28100.1"/>
    <property type="gene ID" value="AT4G28100"/>
</dbReference>
<dbReference type="KEGG" id="ath:AT4G28100"/>
<dbReference type="Araport" id="AT4G28100"/>
<dbReference type="TAIR" id="AT4G28100"/>
<dbReference type="eggNOG" id="ENOG502QR43">
    <property type="taxonomic scope" value="Eukaryota"/>
</dbReference>
<dbReference type="HOGENOM" id="CLU_052743_1_0_1"/>
<dbReference type="InParanoid" id="Q9SUC9"/>
<dbReference type="OMA" id="TESQICR"/>
<dbReference type="PhylomeDB" id="Q9SUC9"/>
<dbReference type="PRO" id="PR:Q9SUC9"/>
<dbReference type="Proteomes" id="UP000006548">
    <property type="component" value="Chromosome 4"/>
</dbReference>
<dbReference type="ExpressionAtlas" id="Q9SUC9">
    <property type="expression patterns" value="baseline and differential"/>
</dbReference>
<dbReference type="GO" id="GO:0005886">
    <property type="term" value="C:plasma membrane"/>
    <property type="evidence" value="ECO:0007005"/>
    <property type="project" value="TAIR"/>
</dbReference>
<dbReference type="GO" id="GO:0098552">
    <property type="term" value="C:side of membrane"/>
    <property type="evidence" value="ECO:0007669"/>
    <property type="project" value="UniProtKB-KW"/>
</dbReference>
<dbReference type="InterPro" id="IPR040376">
    <property type="entry name" value="At4g28100-like"/>
</dbReference>
<dbReference type="PANTHER" id="PTHR34056">
    <property type="entry name" value="GPI-ANCHORED PROTEIN"/>
    <property type="match status" value="1"/>
</dbReference>
<dbReference type="PANTHER" id="PTHR34056:SF3">
    <property type="entry name" value="OS07G0557700 PROTEIN"/>
    <property type="match status" value="1"/>
</dbReference>
<reference key="1">
    <citation type="journal article" date="1999" name="Nature">
        <title>Sequence and analysis of chromosome 4 of the plant Arabidopsis thaliana.</title>
        <authorList>
            <person name="Mayer K.F.X."/>
            <person name="Schueller C."/>
            <person name="Wambutt R."/>
            <person name="Murphy G."/>
            <person name="Volckaert G."/>
            <person name="Pohl T."/>
            <person name="Duesterhoeft A."/>
            <person name="Stiekema W."/>
            <person name="Entian K.-D."/>
            <person name="Terryn N."/>
            <person name="Harris B."/>
            <person name="Ansorge W."/>
            <person name="Brandt P."/>
            <person name="Grivell L.A."/>
            <person name="Rieger M."/>
            <person name="Weichselgartner M."/>
            <person name="de Simone V."/>
            <person name="Obermaier B."/>
            <person name="Mache R."/>
            <person name="Mueller M."/>
            <person name="Kreis M."/>
            <person name="Delseny M."/>
            <person name="Puigdomenech P."/>
            <person name="Watson M."/>
            <person name="Schmidtheini T."/>
            <person name="Reichert B."/>
            <person name="Portetelle D."/>
            <person name="Perez-Alonso M."/>
            <person name="Boutry M."/>
            <person name="Bancroft I."/>
            <person name="Vos P."/>
            <person name="Hoheisel J."/>
            <person name="Zimmermann W."/>
            <person name="Wedler H."/>
            <person name="Ridley P."/>
            <person name="Langham S.-A."/>
            <person name="McCullagh B."/>
            <person name="Bilham L."/>
            <person name="Robben J."/>
            <person name="van der Schueren J."/>
            <person name="Grymonprez B."/>
            <person name="Chuang Y.-J."/>
            <person name="Vandenbussche F."/>
            <person name="Braeken M."/>
            <person name="Weltjens I."/>
            <person name="Voet M."/>
            <person name="Bastiaens I."/>
            <person name="Aert R."/>
            <person name="Defoor E."/>
            <person name="Weitzenegger T."/>
            <person name="Bothe G."/>
            <person name="Ramsperger U."/>
            <person name="Hilbert H."/>
            <person name="Braun M."/>
            <person name="Holzer E."/>
            <person name="Brandt A."/>
            <person name="Peters S."/>
            <person name="van Staveren M."/>
            <person name="Dirkse W."/>
            <person name="Mooijman P."/>
            <person name="Klein Lankhorst R."/>
            <person name="Rose M."/>
            <person name="Hauf J."/>
            <person name="Koetter P."/>
            <person name="Berneiser S."/>
            <person name="Hempel S."/>
            <person name="Feldpausch M."/>
            <person name="Lamberth S."/>
            <person name="Van den Daele H."/>
            <person name="De Keyser A."/>
            <person name="Buysshaert C."/>
            <person name="Gielen J."/>
            <person name="Villarroel R."/>
            <person name="De Clercq R."/>
            <person name="van Montagu M."/>
            <person name="Rogers J."/>
            <person name="Cronin A."/>
            <person name="Quail M.A."/>
            <person name="Bray-Allen S."/>
            <person name="Clark L."/>
            <person name="Doggett J."/>
            <person name="Hall S."/>
            <person name="Kay M."/>
            <person name="Lennard N."/>
            <person name="McLay K."/>
            <person name="Mayes R."/>
            <person name="Pettett A."/>
            <person name="Rajandream M.A."/>
            <person name="Lyne M."/>
            <person name="Benes V."/>
            <person name="Rechmann S."/>
            <person name="Borkova D."/>
            <person name="Bloecker H."/>
            <person name="Scharfe M."/>
            <person name="Grimm M."/>
            <person name="Loehnert T.-H."/>
            <person name="Dose S."/>
            <person name="de Haan M."/>
            <person name="Maarse A.C."/>
            <person name="Schaefer M."/>
            <person name="Mueller-Auer S."/>
            <person name="Gabel C."/>
            <person name="Fuchs M."/>
            <person name="Fartmann B."/>
            <person name="Granderath K."/>
            <person name="Dauner D."/>
            <person name="Herzl A."/>
            <person name="Neumann S."/>
            <person name="Argiriou A."/>
            <person name="Vitale D."/>
            <person name="Liguori R."/>
            <person name="Piravandi E."/>
            <person name="Massenet O."/>
            <person name="Quigley F."/>
            <person name="Clabauld G."/>
            <person name="Muendlein A."/>
            <person name="Felber R."/>
            <person name="Schnabl S."/>
            <person name="Hiller R."/>
            <person name="Schmidt W."/>
            <person name="Lecharny A."/>
            <person name="Aubourg S."/>
            <person name="Chefdor F."/>
            <person name="Cooke R."/>
            <person name="Berger C."/>
            <person name="Monfort A."/>
            <person name="Casacuberta E."/>
            <person name="Gibbons T."/>
            <person name="Weber N."/>
            <person name="Vandenbol M."/>
            <person name="Bargues M."/>
            <person name="Terol J."/>
            <person name="Torres A."/>
            <person name="Perez-Perez A."/>
            <person name="Purnelle B."/>
            <person name="Bent E."/>
            <person name="Johnson S."/>
            <person name="Tacon D."/>
            <person name="Jesse T."/>
            <person name="Heijnen L."/>
            <person name="Schwarz S."/>
            <person name="Scholler P."/>
            <person name="Heber S."/>
            <person name="Francs P."/>
            <person name="Bielke C."/>
            <person name="Frishman D."/>
            <person name="Haase D."/>
            <person name="Lemcke K."/>
            <person name="Mewes H.-W."/>
            <person name="Stocker S."/>
            <person name="Zaccaria P."/>
            <person name="Bevan M."/>
            <person name="Wilson R.K."/>
            <person name="de la Bastide M."/>
            <person name="Habermann K."/>
            <person name="Parnell L."/>
            <person name="Dedhia N."/>
            <person name="Gnoj L."/>
            <person name="Schutz K."/>
            <person name="Huang E."/>
            <person name="Spiegel L."/>
            <person name="Sekhon M."/>
            <person name="Murray J."/>
            <person name="Sheet P."/>
            <person name="Cordes M."/>
            <person name="Abu-Threideh J."/>
            <person name="Stoneking T."/>
            <person name="Kalicki J."/>
            <person name="Graves T."/>
            <person name="Harmon G."/>
            <person name="Edwards J."/>
            <person name="Latreille P."/>
            <person name="Courtney L."/>
            <person name="Cloud J."/>
            <person name="Abbott A."/>
            <person name="Scott K."/>
            <person name="Johnson D."/>
            <person name="Minx P."/>
            <person name="Bentley D."/>
            <person name="Fulton B."/>
            <person name="Miller N."/>
            <person name="Greco T."/>
            <person name="Kemp K."/>
            <person name="Kramer J."/>
            <person name="Fulton L."/>
            <person name="Mardis E."/>
            <person name="Dante M."/>
            <person name="Pepin K."/>
            <person name="Hillier L.W."/>
            <person name="Nelson J."/>
            <person name="Spieth J."/>
            <person name="Ryan E."/>
            <person name="Andrews S."/>
            <person name="Geisel C."/>
            <person name="Layman D."/>
            <person name="Du H."/>
            <person name="Ali J."/>
            <person name="Berghoff A."/>
            <person name="Jones K."/>
            <person name="Drone K."/>
            <person name="Cotton M."/>
            <person name="Joshu C."/>
            <person name="Antonoiu B."/>
            <person name="Zidanic M."/>
            <person name="Strong C."/>
            <person name="Sun H."/>
            <person name="Lamar B."/>
            <person name="Yordan C."/>
            <person name="Ma P."/>
            <person name="Zhong J."/>
            <person name="Preston R."/>
            <person name="Vil D."/>
            <person name="Shekher M."/>
            <person name="Matero A."/>
            <person name="Shah R."/>
            <person name="Swaby I.K."/>
            <person name="O'Shaughnessy A."/>
            <person name="Rodriguez M."/>
            <person name="Hoffman J."/>
            <person name="Till S."/>
            <person name="Granat S."/>
            <person name="Shohdy N."/>
            <person name="Hasegawa A."/>
            <person name="Hameed A."/>
            <person name="Lodhi M."/>
            <person name="Johnson A."/>
            <person name="Chen E."/>
            <person name="Marra M.A."/>
            <person name="Martienssen R."/>
            <person name="McCombie W.R."/>
        </authorList>
    </citation>
    <scope>NUCLEOTIDE SEQUENCE [LARGE SCALE GENOMIC DNA]</scope>
    <source>
        <strain>cv. Columbia</strain>
    </source>
</reference>
<reference key="2">
    <citation type="journal article" date="2017" name="Plant J.">
        <title>Araport11: a complete reannotation of the Arabidopsis thaliana reference genome.</title>
        <authorList>
            <person name="Cheng C.Y."/>
            <person name="Krishnakumar V."/>
            <person name="Chan A.P."/>
            <person name="Thibaud-Nissen F."/>
            <person name="Schobel S."/>
            <person name="Town C.D."/>
        </authorList>
    </citation>
    <scope>GENOME REANNOTATION</scope>
    <source>
        <strain>cv. Columbia</strain>
    </source>
</reference>
<reference key="3">
    <citation type="submission" date="2002-03" db="EMBL/GenBank/DDBJ databases">
        <title>Full-length cDNA from Arabidopsis thaliana.</title>
        <authorList>
            <person name="Brover V.V."/>
            <person name="Troukhan M.E."/>
            <person name="Alexandrov N.A."/>
            <person name="Lu Y.-P."/>
            <person name="Flavell R.B."/>
            <person name="Feldmann K.A."/>
        </authorList>
    </citation>
    <scope>NUCLEOTIDE SEQUENCE [LARGE SCALE MRNA]</scope>
</reference>
<reference key="4">
    <citation type="submission" date="2004-09" db="EMBL/GenBank/DDBJ databases">
        <title>Large-scale analysis of RIKEN Arabidopsis full-length (RAFL) cDNAs.</title>
        <authorList>
            <person name="Totoki Y."/>
            <person name="Seki M."/>
            <person name="Ishida J."/>
            <person name="Nakajima M."/>
            <person name="Enju A."/>
            <person name="Kamiya A."/>
            <person name="Narusaka M."/>
            <person name="Shin-i T."/>
            <person name="Nakagawa M."/>
            <person name="Sakamoto N."/>
            <person name="Oishi K."/>
            <person name="Kohara Y."/>
            <person name="Kobayashi M."/>
            <person name="Toyoda A."/>
            <person name="Sakaki Y."/>
            <person name="Sakurai T."/>
            <person name="Iida K."/>
            <person name="Akiyama K."/>
            <person name="Satou M."/>
            <person name="Toyoda T."/>
            <person name="Konagaya A."/>
            <person name="Carninci P."/>
            <person name="Kawai J."/>
            <person name="Hayashizaki Y."/>
            <person name="Shinozaki K."/>
        </authorList>
    </citation>
    <scope>NUCLEOTIDE SEQUENCE [LARGE SCALE MRNA]</scope>
    <source>
        <strain>cv. Columbia</strain>
    </source>
</reference>